<reference evidence="6" key="1">
    <citation type="journal article" date="2007" name="DNA Repair">
        <title>Altered DNA damage response in Caenorhabditis elegans with impaired poly(ADP-ribose) glycohydrolases genes expression.</title>
        <authorList>
            <person name="St-Laurent J.F."/>
            <person name="Gagnon S.N."/>
            <person name="Dequen F."/>
            <person name="Hardy I."/>
            <person name="Desnoyers S."/>
        </authorList>
    </citation>
    <scope>NUCLEOTIDE SEQUENCE [MRNA] (ISOFORMS A AND B)</scope>
    <scope>FUNCTION</scope>
    <scope>CATALYTIC ACTIVITY</scope>
    <scope>SUBCELLULAR LOCATION</scope>
    <scope>TISSUE SPECIFICITY</scope>
    <scope>DEVELOPMENTAL STAGE</scope>
    <scope>DISRUPTION PHENOTYPE</scope>
    <scope>MUTAGENESIS OF ASP-536; GLU-554; GLU-555 AND TYR-594</scope>
</reference>
<reference evidence="7" key="2">
    <citation type="journal article" date="1998" name="Science">
        <title>Genome sequence of the nematode C. elegans: a platform for investigating biology.</title>
        <authorList>
            <consortium name="The C. elegans sequencing consortium"/>
        </authorList>
    </citation>
    <scope>NUCLEOTIDE SEQUENCE [LARGE SCALE GENOMIC DNA]</scope>
    <source>
        <strain evidence="7">Bristol N2</strain>
    </source>
</reference>
<organism>
    <name type="scientific">Caenorhabditis elegans</name>
    <dbReference type="NCBI Taxonomy" id="6239"/>
    <lineage>
        <taxon>Eukaryota</taxon>
        <taxon>Metazoa</taxon>
        <taxon>Ecdysozoa</taxon>
        <taxon>Nematoda</taxon>
        <taxon>Chromadorea</taxon>
        <taxon>Rhabditida</taxon>
        <taxon>Rhabditina</taxon>
        <taxon>Rhabditomorpha</taxon>
        <taxon>Rhabditoidea</taxon>
        <taxon>Rhabditidae</taxon>
        <taxon>Peloderinae</taxon>
        <taxon>Caenorhabditis</taxon>
    </lineage>
</organism>
<keyword id="KW-0025">Alternative splicing</keyword>
<keyword id="KW-0227">DNA damage</keyword>
<keyword id="KW-0378">Hydrolase</keyword>
<keyword id="KW-0539">Nucleus</keyword>
<keyword id="KW-1185">Reference proteome</keyword>
<feature type="chain" id="PRO_0000066605" description="Poly(ADP-ribose) glycohydrolase 1" evidence="5">
    <location>
        <begin position="1"/>
        <end position="781"/>
    </location>
</feature>
<feature type="region of interest" description="Disordered" evidence="2">
    <location>
        <begin position="28"/>
        <end position="87"/>
    </location>
</feature>
<feature type="region of interest" description="Disordered" evidence="2">
    <location>
        <begin position="102"/>
        <end position="131"/>
    </location>
</feature>
<feature type="region of interest" description="Disordered" evidence="2">
    <location>
        <begin position="206"/>
        <end position="232"/>
    </location>
</feature>
<feature type="compositionally biased region" description="Basic and acidic residues" evidence="2">
    <location>
        <begin position="106"/>
        <end position="121"/>
    </location>
</feature>
<feature type="splice variant" id="VSP_051616" description="In isoform b." evidence="4">
    <original>Q</original>
    <variation>QLSQ</variation>
    <location>
        <position position="162"/>
    </location>
</feature>
<feature type="splice variant" id="VSP_051617" description="In isoform b." evidence="4">
    <location>
        <begin position="217"/>
        <end position="236"/>
    </location>
</feature>
<feature type="mutagenesis site" description="No poly(ADP-ribose) glycohydrolase activity in vitro." evidence="3">
    <original>D</original>
    <variation>N</variation>
    <location>
        <position position="536"/>
    </location>
</feature>
<feature type="mutagenesis site" description="Reduced poly(ADP-ribose) glycohydrolase activity in vitro." evidence="3">
    <original>E</original>
    <variation>N</variation>
    <location>
        <position position="554"/>
    </location>
</feature>
<feature type="mutagenesis site" description="No poly(ADP-ribose) glycohydrolase activity in vitro." evidence="3">
    <original>E</original>
    <variation>N</variation>
    <location>
        <position position="555"/>
    </location>
</feature>
<feature type="mutagenesis site" description="Reduced poly(ADP-ribose) glycohydrolase activity in vitro." evidence="3">
    <original>Y</original>
    <variation>A</variation>
    <location>
        <position position="594"/>
    </location>
</feature>
<sequence>MSKKFIELGDPVTQDEKDYEDYVGVGFAHQVPTMKRRKLTEHGNTTESKEDPEEPKSRDVFVSSQSSDESQEDSAENPEIAKEVSENCENLTETLKISNIESLDNVTERSEHTLDNHKSTEPMEEDVNNKSNIDVAINSDEDDELVLEENNKEMRDGEQVQQDLFADDQELIEYPGIMKDTTTQLDITDSEVETAQKMEMIEETEADSTFVGEDSKNQRQSGTTSDEVDADSQINLATKTVRTSSSSFLSTVSTCEAPAKGRARMYQKELEKHVIAFTEGNLTLQPDLNKVDPDRNYRYCTIPNFPASQGKLREDNRYGPKIVLPQRWREFDSRGRRRDSYFYFKRKLDGYLKCYKTTGYFMFVGLLHNMWEFDPDITYKLPALEMYYKEMSELVGREEVLEKFARVARIAKTAEDILPERIYRLVGDVESATLSHKQCAALVARMFFARPDSPFSFCRILSSDKSICVEKLKFLFTYFDKMSMDPPDGAVSFRLTKMDKDTFNEEWKDKKLRSLPEVEFFDEMLIEDTALCTQVDFANEHLGGGVLNHGSVQEEIRFLMCPEMMVGMLLCEKMKQLEAISIVGAYVFSSYTGYGHTLKWAELQPNHSRQNTNEFRDRFGRLRVETIAIDAILFKGSKLDCQTEQLNKANIIREMKKASIGFMSQGPKFTNIPIVTGWWGCGAFNGDKPLKFIIQVIAAGVADRPLHFCSFGEPELAAKCKKIIERMKQKDVTLGMLFSMINNTGLPHKHFEFYVFDRISTYLSSSEDVESSKSSPSVSRA</sequence>
<name>PARG1_CAEEL</name>
<dbReference type="EC" id="3.2.1.143" evidence="3"/>
<dbReference type="EMBL" id="AY185493">
    <property type="protein sequence ID" value="AAO26316.1"/>
    <property type="molecule type" value="mRNA"/>
</dbReference>
<dbReference type="EMBL" id="AY185494">
    <property type="protein sequence ID" value="AAO26317.1"/>
    <property type="molecule type" value="mRNA"/>
</dbReference>
<dbReference type="EMBL" id="Z68161">
    <property type="protein sequence ID" value="CAA92299.2"/>
    <property type="molecule type" value="Genomic_DNA"/>
</dbReference>
<dbReference type="EMBL" id="Z68161">
    <property type="protein sequence ID" value="CAD89735.1"/>
    <property type="molecule type" value="Genomic_DNA"/>
</dbReference>
<dbReference type="PIR" id="T21138">
    <property type="entry name" value="T21138"/>
</dbReference>
<dbReference type="RefSeq" id="NP_001023135.1">
    <molecule id="Q867X0-1"/>
    <property type="nucleotide sequence ID" value="NM_001027964.5"/>
</dbReference>
<dbReference type="RefSeq" id="NP_001023136.1">
    <molecule id="Q867X0-2"/>
    <property type="nucleotide sequence ID" value="NM_001027965.4"/>
</dbReference>
<dbReference type="SMR" id="Q867X0"/>
<dbReference type="BioGRID" id="42793">
    <property type="interactions" value="1"/>
</dbReference>
<dbReference type="FunCoup" id="Q867X0">
    <property type="interactions" value="71"/>
</dbReference>
<dbReference type="STRING" id="6239.F20C5.1i.1"/>
<dbReference type="PaxDb" id="6239-F20C5.1f"/>
<dbReference type="EnsemblMetazoa" id="F20C5.1a.1">
    <molecule id="Q867X0-1"/>
    <property type="protein sequence ID" value="F20C5.1a.1"/>
    <property type="gene ID" value="WBGene00004051"/>
</dbReference>
<dbReference type="EnsemblMetazoa" id="F20C5.1b.1">
    <molecule id="Q867X0-2"/>
    <property type="protein sequence ID" value="F20C5.1b.1"/>
    <property type="gene ID" value="WBGene00004051"/>
</dbReference>
<dbReference type="GeneID" id="177683"/>
<dbReference type="KEGG" id="cel:CELE_F20C5.1"/>
<dbReference type="UCSC" id="F20C5.1a">
    <molecule id="Q867X0-1"/>
    <property type="organism name" value="c. elegans"/>
</dbReference>
<dbReference type="AGR" id="WB:WBGene00004051"/>
<dbReference type="CTD" id="177683"/>
<dbReference type="WormBase" id="F20C5.1a">
    <molecule id="Q867X0-1"/>
    <property type="protein sequence ID" value="CE33775"/>
    <property type="gene ID" value="WBGene00004051"/>
    <property type="gene designation" value="parg-1"/>
</dbReference>
<dbReference type="WormBase" id="F20C5.1b">
    <molecule id="Q867X0-2"/>
    <property type="protein sequence ID" value="CE32867"/>
    <property type="gene ID" value="WBGene00004051"/>
    <property type="gene designation" value="parg-1"/>
</dbReference>
<dbReference type="eggNOG" id="KOG2064">
    <property type="taxonomic scope" value="Eukaryota"/>
</dbReference>
<dbReference type="InParanoid" id="Q867X0"/>
<dbReference type="OrthoDB" id="1937899at2759"/>
<dbReference type="BRENDA" id="3.2.1.143">
    <property type="organism ID" value="1045"/>
</dbReference>
<dbReference type="PRO" id="PR:Q867X0"/>
<dbReference type="Proteomes" id="UP000001940">
    <property type="component" value="Chromosome IV"/>
</dbReference>
<dbReference type="Bgee" id="WBGene00004051">
    <property type="expression patterns" value="Expressed in germ line (C elegans) and 4 other cell types or tissues"/>
</dbReference>
<dbReference type="ExpressionAtlas" id="Q867X0">
    <property type="expression patterns" value="baseline and differential"/>
</dbReference>
<dbReference type="GO" id="GO:0005737">
    <property type="term" value="C:cytoplasm"/>
    <property type="evidence" value="ECO:0000318"/>
    <property type="project" value="GO_Central"/>
</dbReference>
<dbReference type="GO" id="GO:0043005">
    <property type="term" value="C:neuron projection"/>
    <property type="evidence" value="ECO:0000314"/>
    <property type="project" value="WormBase"/>
</dbReference>
<dbReference type="GO" id="GO:0005634">
    <property type="term" value="C:nucleus"/>
    <property type="evidence" value="ECO:0000314"/>
    <property type="project" value="WormBase"/>
</dbReference>
<dbReference type="GO" id="GO:0004649">
    <property type="term" value="F:poly(ADP-ribose) glycohydrolase activity"/>
    <property type="evidence" value="ECO:0000314"/>
    <property type="project" value="WormBase"/>
</dbReference>
<dbReference type="GO" id="GO:1990966">
    <property type="term" value="P:ATP generation from poly-ADP-D-ribose"/>
    <property type="evidence" value="ECO:0000318"/>
    <property type="project" value="GO_Central"/>
</dbReference>
<dbReference type="GO" id="GO:0005975">
    <property type="term" value="P:carbohydrate metabolic process"/>
    <property type="evidence" value="ECO:0000250"/>
    <property type="project" value="UniProtKB"/>
</dbReference>
<dbReference type="GO" id="GO:0006974">
    <property type="term" value="P:DNA damage response"/>
    <property type="evidence" value="ECO:0007669"/>
    <property type="project" value="UniProtKB-KW"/>
</dbReference>
<dbReference type="GO" id="GO:0009225">
    <property type="term" value="P:nucleotide-sugar metabolic process"/>
    <property type="evidence" value="ECO:0000314"/>
    <property type="project" value="WormBase"/>
</dbReference>
<dbReference type="GO" id="GO:0006282">
    <property type="term" value="P:regulation of DNA repair"/>
    <property type="evidence" value="ECO:0000318"/>
    <property type="project" value="GO_Central"/>
</dbReference>
<dbReference type="GO" id="GO:0010332">
    <property type="term" value="P:response to gamma radiation"/>
    <property type="evidence" value="ECO:0000315"/>
    <property type="project" value="WormBase"/>
</dbReference>
<dbReference type="InterPro" id="IPR046372">
    <property type="entry name" value="PARG_cat_C"/>
</dbReference>
<dbReference type="InterPro" id="IPR048362">
    <property type="entry name" value="PARG_helical"/>
</dbReference>
<dbReference type="InterPro" id="IPR007724">
    <property type="entry name" value="Poly_GlycHdrlase"/>
</dbReference>
<dbReference type="PANTHER" id="PTHR12837">
    <property type="entry name" value="POLY ADP-RIBOSE GLYCOHYDROLASE"/>
    <property type="match status" value="1"/>
</dbReference>
<dbReference type="PANTHER" id="PTHR12837:SF15">
    <property type="entry name" value="POLY(ADP-RIBOSE) GLYCOHYDROLASE"/>
    <property type="match status" value="1"/>
</dbReference>
<dbReference type="Pfam" id="PF05028">
    <property type="entry name" value="PARG_cat_C"/>
    <property type="match status" value="1"/>
</dbReference>
<dbReference type="Pfam" id="PF20811">
    <property type="entry name" value="PARG_cat_N"/>
    <property type="match status" value="1"/>
</dbReference>
<gene>
    <name evidence="8" type="primary">parg-1</name>
    <name evidence="8" type="synonym">pme-3</name>
    <name evidence="8" type="ORF">F20C5.1</name>
</gene>
<evidence type="ECO:0000250" key="1">
    <source>
        <dbReference type="UniProtKB" id="Q86W56"/>
    </source>
</evidence>
<evidence type="ECO:0000256" key="2">
    <source>
        <dbReference type="SAM" id="MobiDB-lite"/>
    </source>
</evidence>
<evidence type="ECO:0000269" key="3">
    <source>
    </source>
</evidence>
<evidence type="ECO:0000303" key="4">
    <source>
    </source>
</evidence>
<evidence type="ECO:0000305" key="5"/>
<evidence type="ECO:0000312" key="6">
    <source>
        <dbReference type="EMBL" id="AAO26316.1"/>
    </source>
</evidence>
<evidence type="ECO:0000312" key="7">
    <source>
        <dbReference type="EMBL" id="CAD89735.1"/>
    </source>
</evidence>
<evidence type="ECO:0000312" key="8">
    <source>
        <dbReference type="WormBase" id="F20C5.1a"/>
    </source>
</evidence>
<evidence type="ECO:0000312" key="9">
    <source>
        <dbReference type="WormBase" id="F20C5.1b"/>
    </source>
</evidence>
<accession>Q867X0</accession>
<accession>Q19637</accession>
<comment type="function">
    <text evidence="1 3">Poly(ADP-ribose) synthesized after DNA damage is only present transiently and is rapidly degraded by poly(ADP-ribose) glycohydrolase (PubMed:17188026). Poly(ADP-ribose) metabolism may be required for maintenance of the normal function of neuronal cells (By similarity).</text>
</comment>
<comment type="catalytic activity">
    <reaction evidence="3">
        <text>[(1''-&gt;2')-ADP-alpha-D-ribose](n) + H2O = [(1''-&gt;2')-ADP-alpha-D-ribose](n-1) + ADP-D-ribose</text>
        <dbReference type="Rhea" id="RHEA:52216"/>
        <dbReference type="Rhea" id="RHEA-COMP:16922"/>
        <dbReference type="Rhea" id="RHEA-COMP:16923"/>
        <dbReference type="ChEBI" id="CHEBI:15377"/>
        <dbReference type="ChEBI" id="CHEBI:57967"/>
        <dbReference type="ChEBI" id="CHEBI:142512"/>
        <dbReference type="EC" id="3.2.1.143"/>
    </reaction>
</comment>
<comment type="subcellular location">
    <subcellularLocation>
        <location evidence="3">Nucleus</location>
    </subcellularLocation>
</comment>
<comment type="alternative products">
    <event type="alternative splicing"/>
    <isoform>
        <id>Q867X0-1</id>
        <name evidence="8">a</name>
        <name evidence="4">long</name>
        <sequence type="displayed"/>
    </isoform>
    <isoform>
        <id>Q867X0-2</id>
        <name evidence="9">b</name>
        <name evidence="4">short</name>
        <sequence type="described" ref="VSP_051616 VSP_051617"/>
    </isoform>
</comment>
<comment type="tissue specificity">
    <text evidence="3">Expressed in head and tail neurons. Also detected in the central nerve cord and motor neurons.</text>
</comment>
<comment type="developmental stage">
    <text evidence="3">Expressed at all developmental stages.</text>
</comment>
<comment type="disruption phenotype">
    <text evidence="3">RNAi-mediated knockdown results in increased sensitivity to gamma irradiation.</text>
</comment>
<comment type="similarity">
    <text evidence="5">Belongs to the poly(ADP-ribose) glycohydrolase family.</text>
</comment>
<comment type="caution">
    <text evidence="3">Weak activity relative to mammalian poly(ADP-ribose) glycohydrolase orthologs.</text>
</comment>
<proteinExistence type="evidence at protein level"/>
<protein>
    <recommendedName>
        <fullName evidence="8">Poly(ADP-ribose) glycohydrolase 1</fullName>
        <ecNumber evidence="3">3.2.1.143</ecNumber>
    </recommendedName>
    <alternativeName>
        <fullName>Poly ADP-ribose metabolism enzyme 3</fullName>
    </alternativeName>
</protein>